<keyword id="KW-0378">Hydrolase</keyword>
<name>GLSA_CLOBL</name>
<evidence type="ECO:0000255" key="1">
    <source>
        <dbReference type="HAMAP-Rule" id="MF_00313"/>
    </source>
</evidence>
<comment type="catalytic activity">
    <reaction evidence="1">
        <text>L-glutamine + H2O = L-glutamate + NH4(+)</text>
        <dbReference type="Rhea" id="RHEA:15889"/>
        <dbReference type="ChEBI" id="CHEBI:15377"/>
        <dbReference type="ChEBI" id="CHEBI:28938"/>
        <dbReference type="ChEBI" id="CHEBI:29985"/>
        <dbReference type="ChEBI" id="CHEBI:58359"/>
        <dbReference type="EC" id="3.5.1.2"/>
    </reaction>
</comment>
<comment type="subunit">
    <text evidence="1">Homotetramer.</text>
</comment>
<comment type="similarity">
    <text evidence="1">Belongs to the glutaminase family.</text>
</comment>
<feature type="chain" id="PRO_1000048332" description="Glutaminase">
    <location>
        <begin position="1"/>
        <end position="305"/>
    </location>
</feature>
<feature type="binding site" evidence="1">
    <location>
        <position position="61"/>
    </location>
    <ligand>
        <name>substrate</name>
    </ligand>
</feature>
<feature type="binding site" evidence="1">
    <location>
        <position position="113"/>
    </location>
    <ligand>
        <name>substrate</name>
    </ligand>
</feature>
<feature type="binding site" evidence="1">
    <location>
        <position position="158"/>
    </location>
    <ligand>
        <name>substrate</name>
    </ligand>
</feature>
<feature type="binding site" evidence="1">
    <location>
        <position position="165"/>
    </location>
    <ligand>
        <name>substrate</name>
    </ligand>
</feature>
<feature type="binding site" evidence="1">
    <location>
        <position position="189"/>
    </location>
    <ligand>
        <name>substrate</name>
    </ligand>
</feature>
<feature type="binding site" evidence="1">
    <location>
        <position position="241"/>
    </location>
    <ligand>
        <name>substrate</name>
    </ligand>
</feature>
<feature type="binding site" evidence="1">
    <location>
        <position position="259"/>
    </location>
    <ligand>
        <name>substrate</name>
    </ligand>
</feature>
<accession>A7GH26</accession>
<protein>
    <recommendedName>
        <fullName evidence="1">Glutaminase</fullName>
        <ecNumber evidence="1">3.5.1.2</ecNumber>
    </recommendedName>
</protein>
<dbReference type="EC" id="3.5.1.2" evidence="1"/>
<dbReference type="EMBL" id="CP000728">
    <property type="protein sequence ID" value="ABS41288.1"/>
    <property type="molecule type" value="Genomic_DNA"/>
</dbReference>
<dbReference type="RefSeq" id="WP_003399984.1">
    <property type="nucleotide sequence ID" value="NC_009699.1"/>
</dbReference>
<dbReference type="SMR" id="A7GH26"/>
<dbReference type="GeneID" id="5185637"/>
<dbReference type="KEGG" id="cbf:CLI_2858"/>
<dbReference type="HOGENOM" id="CLU_027932_1_0_9"/>
<dbReference type="Proteomes" id="UP000002410">
    <property type="component" value="Chromosome"/>
</dbReference>
<dbReference type="GO" id="GO:0004359">
    <property type="term" value="F:glutaminase activity"/>
    <property type="evidence" value="ECO:0007669"/>
    <property type="project" value="UniProtKB-UniRule"/>
</dbReference>
<dbReference type="GO" id="GO:0006537">
    <property type="term" value="P:glutamate biosynthetic process"/>
    <property type="evidence" value="ECO:0007669"/>
    <property type="project" value="TreeGrafter"/>
</dbReference>
<dbReference type="GO" id="GO:0006543">
    <property type="term" value="P:glutamine catabolic process"/>
    <property type="evidence" value="ECO:0007669"/>
    <property type="project" value="TreeGrafter"/>
</dbReference>
<dbReference type="FunFam" id="3.40.710.10:FF:000005">
    <property type="entry name" value="Glutaminase"/>
    <property type="match status" value="1"/>
</dbReference>
<dbReference type="Gene3D" id="3.40.710.10">
    <property type="entry name" value="DD-peptidase/beta-lactamase superfamily"/>
    <property type="match status" value="1"/>
</dbReference>
<dbReference type="HAMAP" id="MF_00313">
    <property type="entry name" value="Glutaminase"/>
    <property type="match status" value="1"/>
</dbReference>
<dbReference type="InterPro" id="IPR012338">
    <property type="entry name" value="Beta-lactam/transpept-like"/>
</dbReference>
<dbReference type="InterPro" id="IPR015868">
    <property type="entry name" value="Glutaminase"/>
</dbReference>
<dbReference type="NCBIfam" id="TIGR03814">
    <property type="entry name" value="Gln_ase"/>
    <property type="match status" value="1"/>
</dbReference>
<dbReference type="PANTHER" id="PTHR12544">
    <property type="entry name" value="GLUTAMINASE"/>
    <property type="match status" value="1"/>
</dbReference>
<dbReference type="PANTHER" id="PTHR12544:SF29">
    <property type="entry name" value="GLUTAMINASE"/>
    <property type="match status" value="1"/>
</dbReference>
<dbReference type="Pfam" id="PF04960">
    <property type="entry name" value="Glutaminase"/>
    <property type="match status" value="1"/>
</dbReference>
<dbReference type="SUPFAM" id="SSF56601">
    <property type="entry name" value="beta-lactamase/transpeptidase-like"/>
    <property type="match status" value="1"/>
</dbReference>
<proteinExistence type="inferred from homology"/>
<reference key="1">
    <citation type="submission" date="2007-06" db="EMBL/GenBank/DDBJ databases">
        <authorList>
            <person name="Brinkac L.M."/>
            <person name="Daugherty S."/>
            <person name="Dodson R.J."/>
            <person name="Madupu R."/>
            <person name="Brown J.L."/>
            <person name="Bruce D."/>
            <person name="Detter C."/>
            <person name="Munk C."/>
            <person name="Smith L.A."/>
            <person name="Smith T.J."/>
            <person name="White O."/>
            <person name="Brettin T.S."/>
        </authorList>
    </citation>
    <scope>NUCLEOTIDE SEQUENCE [LARGE SCALE GENOMIC DNA]</scope>
    <source>
        <strain>Langeland / NCTC 10281 / Type F</strain>
    </source>
</reference>
<sequence length="305" mass="33286">MNRLLKTIIENNRKWISEGKVASYIPELSKMDKNLLGISVCTLGGEEYWEGDAEVKFTIQSISKIVTLMLAIIDNGEDYVFSKVGMEPTETAFNSIVNLEAKESHKPINPMINAGAIVVASMVAGKDSDEKFDRILKFTRKISGNNDIDINLNVYESEKETGHRNRALAYFMKSTGALKGNVEEILDVYFKQCSIEITCKDLARIGVMLANDGVSPYTGDRIVPRHVARIVKTIMVTCGMYDASGNFAVHIGIPAKSGVGGGIIACAPRRMGIGVLGTALDEKGNSIAGTKILEELSKQLDLSIF</sequence>
<gene>
    <name evidence="1" type="primary">glsA</name>
    <name type="ordered locus">CLI_2858</name>
</gene>
<organism>
    <name type="scientific">Clostridium botulinum (strain Langeland / NCTC 10281 / Type F)</name>
    <dbReference type="NCBI Taxonomy" id="441772"/>
    <lineage>
        <taxon>Bacteria</taxon>
        <taxon>Bacillati</taxon>
        <taxon>Bacillota</taxon>
        <taxon>Clostridia</taxon>
        <taxon>Eubacteriales</taxon>
        <taxon>Clostridiaceae</taxon>
        <taxon>Clostridium</taxon>
    </lineage>
</organism>